<protein>
    <recommendedName>
        <fullName evidence="2">Kynurenine--oxoglutarate transaminase 3</fullName>
        <ecNumber evidence="2">2.6.1.7</ecNumber>
    </recommendedName>
    <alternativeName>
        <fullName evidence="2">Cysteine-S-conjugate beta-lyase 2</fullName>
        <ecNumber evidence="2">4.4.1.13</ecNumber>
    </alternativeName>
    <alternativeName>
        <fullName evidence="8">Kynurenine aminotransferase 3</fullName>
    </alternativeName>
    <alternativeName>
        <fullName>Kynurenine aminotransferase III</fullName>
        <shortName>KATIII</shortName>
    </alternativeName>
    <alternativeName>
        <fullName evidence="2">Kynurenine--glyoxylate transaminase</fullName>
        <ecNumber evidence="2">2.6.1.63</ecNumber>
    </alternativeName>
    <alternativeName>
        <fullName>Kynurenine--oxoglutarate transaminase III</fullName>
    </alternativeName>
</protein>
<proteinExistence type="evidence at protein level"/>
<sequence>MFLAQRSLCSLSGRAKFLKTISSSKILGFSTSAKMSLKFTNAKRIEGLDSNVWIEFTKLAADPSVVNLGQGFPDISPPTYVKEELSKIAAIDSLNQYTRGFGHPSLVKALSYLYEKLYQKQIDSNKEILVTVGAYGSLFNTIQALIDEGDEVILIVPFYDCYEPMVRMAGATPVFIPLRSKPVYGKRWSSSDWTLDPQELESKFNSKTKAIILNTPHNPLGKVYNREELQVIADLCIKYDTLCISDEVYEWLVYSGNKHLKIATFPGMWERTITIGSAGKTFSVTGWKLGWSIGPNHLIKHLQTVQQNTIYTCATPLQEALAQAFWIDIKRMDDPECYFNSLPKELEVKRDRMVRLLESVGLKPIVPDGGYFIIADVSLLDPDLSDMKNNEPYDYKFVKWMTKHKKLSAIPVSAFCNSETKSQFEKFVRFCFIKKDSTLDAAEEIIKAWSVQKS</sequence>
<accession>Q6YP21</accession>
<accession>B3KQ13</accession>
<accession>O95335</accession>
<accession>Q5JS27</accession>
<accession>Q5T9T7</accession>
<accession>Q5T9T8</accession>
<accession>Q6AI27</accession>
<accession>Q6ICW1</accession>
<accession>Q9BVY5</accession>
<keyword id="KW-0007">Acetylation</keyword>
<keyword id="KW-0025">Alternative splicing</keyword>
<keyword id="KW-0032">Aminotransferase</keyword>
<keyword id="KW-0456">Lyase</keyword>
<keyword id="KW-1267">Proteomics identification</keyword>
<keyword id="KW-0663">Pyridoxal phosphate</keyword>
<keyword id="KW-1185">Reference proteome</keyword>
<keyword id="KW-0808">Transferase</keyword>
<gene>
    <name evidence="8" type="primary">KYAT3</name>
    <name type="synonym">CCBL2</name>
    <name type="synonym">KAT3</name>
</gene>
<reference key="1">
    <citation type="journal article" date="2006" name="Gene">
        <title>Characterization of kynurenine aminotransferase III, a novel member of a phylogenetically conserved KAT family.</title>
        <authorList>
            <person name="Yu P."/>
            <person name="Li Z."/>
            <person name="Zhang L."/>
            <person name="Tagle D.A."/>
            <person name="Cai T."/>
        </authorList>
    </citation>
    <scope>NUCLEOTIDE SEQUENCE [MRNA] (ISOFORM 1)</scope>
</reference>
<reference key="2">
    <citation type="journal article" date="2007" name="BMC Genomics">
        <title>The full-ORF clone resource of the German cDNA consortium.</title>
        <authorList>
            <person name="Bechtel S."/>
            <person name="Rosenfelder H."/>
            <person name="Duda A."/>
            <person name="Schmidt C.P."/>
            <person name="Ernst U."/>
            <person name="Wellenreuther R."/>
            <person name="Mehrle A."/>
            <person name="Schuster C."/>
            <person name="Bahr A."/>
            <person name="Bloecker H."/>
            <person name="Heubner D."/>
            <person name="Hoerlein A."/>
            <person name="Michel G."/>
            <person name="Wedler H."/>
            <person name="Koehrer K."/>
            <person name="Ottenwaelder B."/>
            <person name="Poustka A."/>
            <person name="Wiemann S."/>
            <person name="Schupp I."/>
        </authorList>
    </citation>
    <scope>NUCLEOTIDE SEQUENCE [LARGE SCALE MRNA] (ISOFORM 2)</scope>
    <source>
        <tissue>Fetal kidney</tissue>
    </source>
</reference>
<reference key="3">
    <citation type="journal article" date="2004" name="Nat. Genet.">
        <title>Complete sequencing and characterization of 21,243 full-length human cDNAs.</title>
        <authorList>
            <person name="Ota T."/>
            <person name="Suzuki Y."/>
            <person name="Nishikawa T."/>
            <person name="Otsuki T."/>
            <person name="Sugiyama T."/>
            <person name="Irie R."/>
            <person name="Wakamatsu A."/>
            <person name="Hayashi K."/>
            <person name="Sato H."/>
            <person name="Nagai K."/>
            <person name="Kimura K."/>
            <person name="Makita H."/>
            <person name="Sekine M."/>
            <person name="Obayashi M."/>
            <person name="Nishi T."/>
            <person name="Shibahara T."/>
            <person name="Tanaka T."/>
            <person name="Ishii S."/>
            <person name="Yamamoto J."/>
            <person name="Saito K."/>
            <person name="Kawai Y."/>
            <person name="Isono Y."/>
            <person name="Nakamura Y."/>
            <person name="Nagahari K."/>
            <person name="Murakami K."/>
            <person name="Yasuda T."/>
            <person name="Iwayanagi T."/>
            <person name="Wagatsuma M."/>
            <person name="Shiratori A."/>
            <person name="Sudo H."/>
            <person name="Hosoiri T."/>
            <person name="Kaku Y."/>
            <person name="Kodaira H."/>
            <person name="Kondo H."/>
            <person name="Sugawara M."/>
            <person name="Takahashi M."/>
            <person name="Kanda K."/>
            <person name="Yokoi T."/>
            <person name="Furuya T."/>
            <person name="Kikkawa E."/>
            <person name="Omura Y."/>
            <person name="Abe K."/>
            <person name="Kamihara K."/>
            <person name="Katsuta N."/>
            <person name="Sato K."/>
            <person name="Tanikawa M."/>
            <person name="Yamazaki M."/>
            <person name="Ninomiya K."/>
            <person name="Ishibashi T."/>
            <person name="Yamashita H."/>
            <person name="Murakawa K."/>
            <person name="Fujimori K."/>
            <person name="Tanai H."/>
            <person name="Kimata M."/>
            <person name="Watanabe M."/>
            <person name="Hiraoka S."/>
            <person name="Chiba Y."/>
            <person name="Ishida S."/>
            <person name="Ono Y."/>
            <person name="Takiguchi S."/>
            <person name="Watanabe S."/>
            <person name="Yosida M."/>
            <person name="Hotuta T."/>
            <person name="Kusano J."/>
            <person name="Kanehori K."/>
            <person name="Takahashi-Fujii A."/>
            <person name="Hara H."/>
            <person name="Tanase T.-O."/>
            <person name="Nomura Y."/>
            <person name="Togiya S."/>
            <person name="Komai F."/>
            <person name="Hara R."/>
            <person name="Takeuchi K."/>
            <person name="Arita M."/>
            <person name="Imose N."/>
            <person name="Musashino K."/>
            <person name="Yuuki H."/>
            <person name="Oshima A."/>
            <person name="Sasaki N."/>
            <person name="Aotsuka S."/>
            <person name="Yoshikawa Y."/>
            <person name="Matsunawa H."/>
            <person name="Ichihara T."/>
            <person name="Shiohata N."/>
            <person name="Sano S."/>
            <person name="Moriya S."/>
            <person name="Momiyama H."/>
            <person name="Satoh N."/>
            <person name="Takami S."/>
            <person name="Terashima Y."/>
            <person name="Suzuki O."/>
            <person name="Nakagawa S."/>
            <person name="Senoh A."/>
            <person name="Mizoguchi H."/>
            <person name="Goto Y."/>
            <person name="Shimizu F."/>
            <person name="Wakebe H."/>
            <person name="Hishigaki H."/>
            <person name="Watanabe T."/>
            <person name="Sugiyama A."/>
            <person name="Takemoto M."/>
            <person name="Kawakami B."/>
            <person name="Yamazaki M."/>
            <person name="Watanabe K."/>
            <person name="Kumagai A."/>
            <person name="Itakura S."/>
            <person name="Fukuzumi Y."/>
            <person name="Fujimori Y."/>
            <person name="Komiyama M."/>
            <person name="Tashiro H."/>
            <person name="Tanigami A."/>
            <person name="Fujiwara T."/>
            <person name="Ono T."/>
            <person name="Yamada K."/>
            <person name="Fujii Y."/>
            <person name="Ozaki K."/>
            <person name="Hirao M."/>
            <person name="Ohmori Y."/>
            <person name="Kawabata A."/>
            <person name="Hikiji T."/>
            <person name="Kobatake N."/>
            <person name="Inagaki H."/>
            <person name="Ikema Y."/>
            <person name="Okamoto S."/>
            <person name="Okitani R."/>
            <person name="Kawakami T."/>
            <person name="Noguchi S."/>
            <person name="Itoh T."/>
            <person name="Shigeta K."/>
            <person name="Senba T."/>
            <person name="Matsumura K."/>
            <person name="Nakajima Y."/>
            <person name="Mizuno T."/>
            <person name="Morinaga M."/>
            <person name="Sasaki M."/>
            <person name="Togashi T."/>
            <person name="Oyama M."/>
            <person name="Hata H."/>
            <person name="Watanabe M."/>
            <person name="Komatsu T."/>
            <person name="Mizushima-Sugano J."/>
            <person name="Satoh T."/>
            <person name="Shirai Y."/>
            <person name="Takahashi Y."/>
            <person name="Nakagawa K."/>
            <person name="Okumura K."/>
            <person name="Nagase T."/>
            <person name="Nomura N."/>
            <person name="Kikuchi H."/>
            <person name="Masuho Y."/>
            <person name="Yamashita R."/>
            <person name="Nakai K."/>
            <person name="Yada T."/>
            <person name="Nakamura Y."/>
            <person name="Ohara O."/>
            <person name="Isogai T."/>
            <person name="Sugano S."/>
        </authorList>
    </citation>
    <scope>NUCLEOTIDE SEQUENCE [LARGE SCALE MRNA] (ISOFORM 3)</scope>
    <source>
        <tissue>Stomach</tissue>
    </source>
</reference>
<reference key="4">
    <citation type="journal article" date="2006" name="Nature">
        <title>The DNA sequence and biological annotation of human chromosome 1.</title>
        <authorList>
            <person name="Gregory S.G."/>
            <person name="Barlow K.F."/>
            <person name="McLay K.E."/>
            <person name="Kaul R."/>
            <person name="Swarbreck D."/>
            <person name="Dunham A."/>
            <person name="Scott C.E."/>
            <person name="Howe K.L."/>
            <person name="Woodfine K."/>
            <person name="Spencer C.C.A."/>
            <person name="Jones M.C."/>
            <person name="Gillson C."/>
            <person name="Searle S."/>
            <person name="Zhou Y."/>
            <person name="Kokocinski F."/>
            <person name="McDonald L."/>
            <person name="Evans R."/>
            <person name="Phillips K."/>
            <person name="Atkinson A."/>
            <person name="Cooper R."/>
            <person name="Jones C."/>
            <person name="Hall R.E."/>
            <person name="Andrews T.D."/>
            <person name="Lloyd C."/>
            <person name="Ainscough R."/>
            <person name="Almeida J.P."/>
            <person name="Ambrose K.D."/>
            <person name="Anderson F."/>
            <person name="Andrew R.W."/>
            <person name="Ashwell R.I.S."/>
            <person name="Aubin K."/>
            <person name="Babbage A.K."/>
            <person name="Bagguley C.L."/>
            <person name="Bailey J."/>
            <person name="Beasley H."/>
            <person name="Bethel G."/>
            <person name="Bird C.P."/>
            <person name="Bray-Allen S."/>
            <person name="Brown J.Y."/>
            <person name="Brown A.J."/>
            <person name="Buckley D."/>
            <person name="Burton J."/>
            <person name="Bye J."/>
            <person name="Carder C."/>
            <person name="Chapman J.C."/>
            <person name="Clark S.Y."/>
            <person name="Clarke G."/>
            <person name="Clee C."/>
            <person name="Cobley V."/>
            <person name="Collier R.E."/>
            <person name="Corby N."/>
            <person name="Coville G.J."/>
            <person name="Davies J."/>
            <person name="Deadman R."/>
            <person name="Dunn M."/>
            <person name="Earthrowl M."/>
            <person name="Ellington A.G."/>
            <person name="Errington H."/>
            <person name="Frankish A."/>
            <person name="Frankland J."/>
            <person name="French L."/>
            <person name="Garner P."/>
            <person name="Garnett J."/>
            <person name="Gay L."/>
            <person name="Ghori M.R.J."/>
            <person name="Gibson R."/>
            <person name="Gilby L.M."/>
            <person name="Gillett W."/>
            <person name="Glithero R.J."/>
            <person name="Grafham D.V."/>
            <person name="Griffiths C."/>
            <person name="Griffiths-Jones S."/>
            <person name="Grocock R."/>
            <person name="Hammond S."/>
            <person name="Harrison E.S.I."/>
            <person name="Hart E."/>
            <person name="Haugen E."/>
            <person name="Heath P.D."/>
            <person name="Holmes S."/>
            <person name="Holt K."/>
            <person name="Howden P.J."/>
            <person name="Hunt A.R."/>
            <person name="Hunt S.E."/>
            <person name="Hunter G."/>
            <person name="Isherwood J."/>
            <person name="James R."/>
            <person name="Johnson C."/>
            <person name="Johnson D."/>
            <person name="Joy A."/>
            <person name="Kay M."/>
            <person name="Kershaw J.K."/>
            <person name="Kibukawa M."/>
            <person name="Kimberley A.M."/>
            <person name="King A."/>
            <person name="Knights A.J."/>
            <person name="Lad H."/>
            <person name="Laird G."/>
            <person name="Lawlor S."/>
            <person name="Leongamornlert D.A."/>
            <person name="Lloyd D.M."/>
            <person name="Loveland J."/>
            <person name="Lovell J."/>
            <person name="Lush M.J."/>
            <person name="Lyne R."/>
            <person name="Martin S."/>
            <person name="Mashreghi-Mohammadi M."/>
            <person name="Matthews L."/>
            <person name="Matthews N.S.W."/>
            <person name="McLaren S."/>
            <person name="Milne S."/>
            <person name="Mistry S."/>
            <person name="Moore M.J.F."/>
            <person name="Nickerson T."/>
            <person name="O'Dell C.N."/>
            <person name="Oliver K."/>
            <person name="Palmeiri A."/>
            <person name="Palmer S.A."/>
            <person name="Parker A."/>
            <person name="Patel D."/>
            <person name="Pearce A.V."/>
            <person name="Peck A.I."/>
            <person name="Pelan S."/>
            <person name="Phelps K."/>
            <person name="Phillimore B.J."/>
            <person name="Plumb R."/>
            <person name="Rajan J."/>
            <person name="Raymond C."/>
            <person name="Rouse G."/>
            <person name="Saenphimmachak C."/>
            <person name="Sehra H.K."/>
            <person name="Sheridan E."/>
            <person name="Shownkeen R."/>
            <person name="Sims S."/>
            <person name="Skuce C.D."/>
            <person name="Smith M."/>
            <person name="Steward C."/>
            <person name="Subramanian S."/>
            <person name="Sycamore N."/>
            <person name="Tracey A."/>
            <person name="Tromans A."/>
            <person name="Van Helmond Z."/>
            <person name="Wall M."/>
            <person name="Wallis J.M."/>
            <person name="White S."/>
            <person name="Whitehead S.L."/>
            <person name="Wilkinson J.E."/>
            <person name="Willey D.L."/>
            <person name="Williams H."/>
            <person name="Wilming L."/>
            <person name="Wray P.W."/>
            <person name="Wu Z."/>
            <person name="Coulson A."/>
            <person name="Vaudin M."/>
            <person name="Sulston J.E."/>
            <person name="Durbin R.M."/>
            <person name="Hubbard T."/>
            <person name="Wooster R."/>
            <person name="Dunham I."/>
            <person name="Carter N.P."/>
            <person name="McVean G."/>
            <person name="Ross M.T."/>
            <person name="Harrow J."/>
            <person name="Olson M.V."/>
            <person name="Beck S."/>
            <person name="Rogers J."/>
            <person name="Bentley D.R."/>
        </authorList>
    </citation>
    <scope>NUCLEOTIDE SEQUENCE [LARGE SCALE GENOMIC DNA]</scope>
</reference>
<reference key="5">
    <citation type="journal article" date="2004" name="Genome Res.">
        <title>The status, quality, and expansion of the NIH full-length cDNA project: the Mammalian Gene Collection (MGC).</title>
        <authorList>
            <consortium name="The MGC Project Team"/>
        </authorList>
    </citation>
    <scope>NUCLEOTIDE SEQUENCE [LARGE SCALE MRNA] OF 85-454 (ISOFORM 1)</scope>
    <source>
        <tissue>Placenta</tissue>
    </source>
</reference>
<reference key="6">
    <citation type="submission" date="1998-08" db="EMBL/GenBank/DDBJ databases">
        <title>Full-insert sequence of mapped XREF EST.</title>
        <authorList>
            <person name="Barrow I.K.-P."/>
            <person name="Boguski M.S."/>
            <person name="Touchman J.W."/>
            <person name="Spencer F."/>
        </authorList>
    </citation>
    <scope>NUCLEOTIDE SEQUENCE [LARGE SCALE MRNA] OF 144-454</scope>
    <scope>VARIANT PRO-206</scope>
</reference>
<reference key="7">
    <citation type="submission" date="2004-05" db="EMBL/GenBank/DDBJ databases">
        <title>Cloning of human full open reading frames in Gateway(TM) system entry vector (pDONR201).</title>
        <authorList>
            <person name="Ebert L."/>
            <person name="Schick M."/>
            <person name="Neubert P."/>
            <person name="Schatten R."/>
            <person name="Henze S."/>
            <person name="Korn B."/>
        </authorList>
    </citation>
    <scope>NUCLEOTIDE SEQUENCE [LARGE SCALE MRNA] OF 165-338</scope>
    <scope>VARIANT PRO-206</scope>
</reference>
<reference key="8">
    <citation type="journal article" date="2009" name="Science">
        <title>Lysine acetylation targets protein complexes and co-regulates major cellular functions.</title>
        <authorList>
            <person name="Choudhary C."/>
            <person name="Kumar C."/>
            <person name="Gnad F."/>
            <person name="Nielsen M.L."/>
            <person name="Rehman M."/>
            <person name="Walther T.C."/>
            <person name="Olsen J.V."/>
            <person name="Mann M."/>
        </authorList>
    </citation>
    <scope>ACETYLATION [LARGE SCALE ANALYSIS] AT LYS-116</scope>
    <scope>IDENTIFICATION BY MASS SPECTROMETRY [LARGE SCALE ANALYSIS]</scope>
</reference>
<reference key="9">
    <citation type="journal article" date="2011" name="BMC Syst. Biol.">
        <title>Initial characterization of the human central proteome.</title>
        <authorList>
            <person name="Burkard T.R."/>
            <person name="Planyavsky M."/>
            <person name="Kaupe I."/>
            <person name="Breitwieser F.P."/>
            <person name="Buerckstuemmer T."/>
            <person name="Bennett K.L."/>
            <person name="Superti-Furga G."/>
            <person name="Colinge J."/>
        </authorList>
    </citation>
    <scope>IDENTIFICATION BY MASS SPECTROMETRY [LARGE SCALE ANALYSIS]</scope>
</reference>
<reference key="10">
    <citation type="journal article" date="2012" name="Proc. Natl. Acad. Sci. U.S.A.">
        <title>N-terminal acetylome analyses and functional insights of the N-terminal acetyltransferase NatB.</title>
        <authorList>
            <person name="Van Damme P."/>
            <person name="Lasa M."/>
            <person name="Polevoda B."/>
            <person name="Gazquez C."/>
            <person name="Elosegui-Artola A."/>
            <person name="Kim D.S."/>
            <person name="De Juan-Pardo E."/>
            <person name="Demeyer K."/>
            <person name="Hole K."/>
            <person name="Larrea E."/>
            <person name="Timmerman E."/>
            <person name="Prieto J."/>
            <person name="Arnesen T."/>
            <person name="Sherman F."/>
            <person name="Gevaert K."/>
            <person name="Aldabe R."/>
        </authorList>
    </citation>
    <scope>ACETYLATION [LARGE SCALE ANALYSIS] AT SER-2 (ISOFORM 3)</scope>
    <scope>CLEAVAGE OF INITIATOR METHIONINE [LARGE SCALE ANALYSIS] (ISOFORM 3)</scope>
    <scope>IDENTIFICATION BY MASS SPECTROMETRY [LARGE SCALE ANALYSIS]</scope>
</reference>
<organism>
    <name type="scientific">Homo sapiens</name>
    <name type="common">Human</name>
    <dbReference type="NCBI Taxonomy" id="9606"/>
    <lineage>
        <taxon>Eukaryota</taxon>
        <taxon>Metazoa</taxon>
        <taxon>Chordata</taxon>
        <taxon>Craniata</taxon>
        <taxon>Vertebrata</taxon>
        <taxon>Euteleostomi</taxon>
        <taxon>Mammalia</taxon>
        <taxon>Eutheria</taxon>
        <taxon>Euarchontoglires</taxon>
        <taxon>Primates</taxon>
        <taxon>Haplorrhini</taxon>
        <taxon>Catarrhini</taxon>
        <taxon>Hominidae</taxon>
        <taxon>Homo</taxon>
    </lineage>
</organism>
<evidence type="ECO:0000250" key="1">
    <source>
        <dbReference type="UniProtKB" id="Q16773"/>
    </source>
</evidence>
<evidence type="ECO:0000250" key="2">
    <source>
        <dbReference type="UniProtKB" id="Q71RI9"/>
    </source>
</evidence>
<evidence type="ECO:0000269" key="3">
    <source ref="6"/>
</evidence>
<evidence type="ECO:0000269" key="4">
    <source ref="7"/>
</evidence>
<evidence type="ECO:0000303" key="5">
    <source>
    </source>
</evidence>
<evidence type="ECO:0000303" key="6">
    <source>
    </source>
</evidence>
<evidence type="ECO:0000305" key="7"/>
<evidence type="ECO:0000312" key="8">
    <source>
        <dbReference type="HGNC" id="HGNC:33238"/>
    </source>
</evidence>
<evidence type="ECO:0007744" key="9">
    <source>
    </source>
</evidence>
<evidence type="ECO:0007744" key="10">
    <source>
    </source>
</evidence>
<feature type="chain" id="PRO_0000287704" description="Kynurenine--oxoglutarate transaminase 3">
    <location>
        <begin position="1"/>
        <end position="454"/>
    </location>
</feature>
<feature type="binding site" evidence="1">
    <location>
        <position position="71"/>
    </location>
    <ligand>
        <name>substrate</name>
    </ligand>
</feature>
<feature type="binding site" evidence="1">
    <location>
        <position position="218"/>
    </location>
    <ligand>
        <name>substrate</name>
    </ligand>
</feature>
<feature type="binding site" evidence="1">
    <location>
        <position position="429"/>
    </location>
    <ligand>
        <name>substrate</name>
    </ligand>
</feature>
<feature type="modified residue" description="N6-acetyllysine; alternate" evidence="9">
    <location>
        <position position="116"/>
    </location>
</feature>
<feature type="modified residue" description="N6-succinyllysine; alternate" evidence="2">
    <location>
        <position position="116"/>
    </location>
</feature>
<feature type="modified residue" description="N6-(pyridoxal phosphate)lysine" evidence="1">
    <location>
        <position position="280"/>
    </location>
</feature>
<feature type="splice variant" id="VSP_042841" description="In isoform 3." evidence="5">
    <location>
        <begin position="1"/>
        <end position="34"/>
    </location>
</feature>
<feature type="splice variant" id="VSP_025603" description="In isoform 2." evidence="6">
    <original>VILIVPFYDCYEPMVR</original>
    <variation>YNACTVKFTNLKCTAG</variation>
    <location>
        <begin position="152"/>
        <end position="167"/>
    </location>
</feature>
<feature type="splice variant" id="VSP_025604" description="In isoform 2." evidence="6">
    <location>
        <begin position="168"/>
        <end position="454"/>
    </location>
</feature>
<feature type="sequence variant" id="VAR_032352" description="In dbSNP:rs1059370." evidence="3 4">
    <original>S</original>
    <variation>P</variation>
    <location>
        <position position="206"/>
    </location>
</feature>
<feature type="sequence conflict" description="In Ref. 7; CAG29278." evidence="7" ref="7">
    <original>W</original>
    <variation>R</variation>
    <location>
        <position position="251"/>
    </location>
</feature>
<feature type="initiator methionine" description="Removed" evidence="10">
    <location sequence="Q6YP21-3">
        <position position="1"/>
    </location>
</feature>
<feature type="modified residue" description="N-acetylserine" evidence="10">
    <location sequence="Q6YP21-3">
        <position position="2"/>
    </location>
</feature>
<name>KAT3_HUMAN</name>
<dbReference type="EC" id="2.6.1.7" evidence="2"/>
<dbReference type="EC" id="4.4.1.13" evidence="2"/>
<dbReference type="EC" id="2.6.1.63" evidence="2"/>
<dbReference type="EMBL" id="AY028624">
    <property type="protein sequence ID" value="AAK26163.1"/>
    <property type="molecule type" value="mRNA"/>
</dbReference>
<dbReference type="EMBL" id="CR627392">
    <property type="protein sequence ID" value="CAH10487.1"/>
    <property type="molecule type" value="mRNA"/>
</dbReference>
<dbReference type="EMBL" id="AK057176">
    <property type="protein sequence ID" value="BAG51875.1"/>
    <property type="molecule type" value="mRNA"/>
</dbReference>
<dbReference type="EMBL" id="AL139416">
    <property type="status" value="NOT_ANNOTATED_CDS"/>
    <property type="molecule type" value="Genomic_DNA"/>
</dbReference>
<dbReference type="EMBL" id="AL445991">
    <property type="status" value="NOT_ANNOTATED_CDS"/>
    <property type="molecule type" value="Genomic_DNA"/>
</dbReference>
<dbReference type="EMBL" id="BC000819">
    <property type="protein sequence ID" value="AAH00819.1"/>
    <property type="status" value="ALT_INIT"/>
    <property type="molecule type" value="mRNA"/>
</dbReference>
<dbReference type="EMBL" id="AF091090">
    <property type="protein sequence ID" value="AAC72959.1"/>
    <property type="status" value="ALT_FRAME"/>
    <property type="molecule type" value="mRNA"/>
</dbReference>
<dbReference type="EMBL" id="CR450282">
    <property type="protein sequence ID" value="CAG29278.1"/>
    <property type="status" value="ALT_FRAME"/>
    <property type="molecule type" value="mRNA"/>
</dbReference>
<dbReference type="CCDS" id="CCDS30766.1">
    <molecule id="Q6YP21-1"/>
</dbReference>
<dbReference type="CCDS" id="CCDS30767.1">
    <molecule id="Q6YP21-3"/>
</dbReference>
<dbReference type="RefSeq" id="NP_001008661.1">
    <molecule id="Q6YP21-1"/>
    <property type="nucleotide sequence ID" value="NM_001008661.3"/>
</dbReference>
<dbReference type="RefSeq" id="NP_001008662.1">
    <molecule id="Q6YP21-3"/>
    <property type="nucleotide sequence ID" value="NM_001008662.3"/>
</dbReference>
<dbReference type="RefSeq" id="NP_001336376.1">
    <molecule id="Q6YP21-3"/>
    <property type="nucleotide sequence ID" value="NM_001349447.1"/>
</dbReference>
<dbReference type="RefSeq" id="NP_001336377.1">
    <molecule id="Q6YP21-1"/>
    <property type="nucleotide sequence ID" value="NM_001349448.1"/>
</dbReference>
<dbReference type="SMR" id="Q6YP21"/>
<dbReference type="BioGRID" id="121128">
    <property type="interactions" value="51"/>
</dbReference>
<dbReference type="FunCoup" id="Q6YP21">
    <property type="interactions" value="1495"/>
</dbReference>
<dbReference type="IntAct" id="Q6YP21">
    <property type="interactions" value="13"/>
</dbReference>
<dbReference type="STRING" id="9606.ENSP00000260508"/>
<dbReference type="BindingDB" id="Q6YP21"/>
<dbReference type="ChEMBL" id="CHEMBL2046260"/>
<dbReference type="DrugBank" id="DB00114">
    <property type="generic name" value="Pyridoxal phosphate"/>
</dbReference>
<dbReference type="GlyGen" id="Q6YP21">
    <property type="glycosylation" value="1 site, 1 O-linked glycan (1 site)"/>
</dbReference>
<dbReference type="iPTMnet" id="Q6YP21"/>
<dbReference type="PhosphoSitePlus" id="Q6YP21"/>
<dbReference type="SwissPalm" id="Q6YP21"/>
<dbReference type="BioMuta" id="KYAT3"/>
<dbReference type="DMDM" id="74710502"/>
<dbReference type="jPOST" id="Q6YP21"/>
<dbReference type="MassIVE" id="Q6YP21"/>
<dbReference type="PaxDb" id="9606-ENSP00000260508"/>
<dbReference type="PeptideAtlas" id="Q6YP21"/>
<dbReference type="ProteomicsDB" id="67858">
    <molecule id="Q6YP21-1"/>
</dbReference>
<dbReference type="ProteomicsDB" id="67859">
    <molecule id="Q6YP21-2"/>
</dbReference>
<dbReference type="ProteomicsDB" id="67860">
    <molecule id="Q6YP21-3"/>
</dbReference>
<dbReference type="Pumba" id="Q6YP21"/>
<dbReference type="Antibodypedia" id="19822">
    <property type="antibodies" value="85 antibodies from 19 providers"/>
</dbReference>
<dbReference type="DNASU" id="56267"/>
<dbReference type="Ensembl" id="ENST00000260508.9">
    <molecule id="Q6YP21-1"/>
    <property type="protein sequence ID" value="ENSP00000260508.4"/>
    <property type="gene ID" value="ENSG00000137944.18"/>
</dbReference>
<dbReference type="Ensembl" id="ENST00000370491.7">
    <molecule id="Q6YP21-3"/>
    <property type="protein sequence ID" value="ENSP00000359522.3"/>
    <property type="gene ID" value="ENSG00000137944.18"/>
</dbReference>
<dbReference type="GeneID" id="56267"/>
<dbReference type="KEGG" id="hsa:56267"/>
<dbReference type="MANE-Select" id="ENST00000260508.9">
    <property type="protein sequence ID" value="ENSP00000260508.4"/>
    <property type="RefSeq nucleotide sequence ID" value="NM_001008661.3"/>
    <property type="RefSeq protein sequence ID" value="NP_001008661.1"/>
</dbReference>
<dbReference type="UCSC" id="uc001dmp.3">
    <molecule id="Q6YP21-1"/>
    <property type="organism name" value="human"/>
</dbReference>
<dbReference type="AGR" id="HGNC:33238"/>
<dbReference type="CTD" id="56267"/>
<dbReference type="DisGeNET" id="56267"/>
<dbReference type="GeneCards" id="KYAT3"/>
<dbReference type="HGNC" id="HGNC:33238">
    <property type="gene designation" value="KYAT3"/>
</dbReference>
<dbReference type="HPA" id="ENSG00000137944">
    <property type="expression patterns" value="Low tissue specificity"/>
</dbReference>
<dbReference type="MIM" id="610656">
    <property type="type" value="gene"/>
</dbReference>
<dbReference type="neXtProt" id="NX_Q6YP21"/>
<dbReference type="OpenTargets" id="ENSG00000137944"/>
<dbReference type="PharmGKB" id="PA162381274"/>
<dbReference type="VEuPathDB" id="HostDB:ENSG00000137944"/>
<dbReference type="eggNOG" id="KOG0257">
    <property type="taxonomic scope" value="Eukaryota"/>
</dbReference>
<dbReference type="GeneTree" id="ENSGT00940000155827"/>
<dbReference type="HOGENOM" id="CLU_017584_4_0_1"/>
<dbReference type="InParanoid" id="Q6YP21"/>
<dbReference type="OMA" id="PRDFKLC"/>
<dbReference type="OrthoDB" id="2414662at2759"/>
<dbReference type="PAN-GO" id="Q6YP21">
    <property type="GO annotations" value="3 GO annotations based on evolutionary models"/>
</dbReference>
<dbReference type="PhylomeDB" id="Q6YP21"/>
<dbReference type="TreeFam" id="TF352342"/>
<dbReference type="BioCyc" id="MetaCyc:HS06422-MONOMER"/>
<dbReference type="BRENDA" id="2.6.1.7">
    <property type="organism ID" value="2681"/>
</dbReference>
<dbReference type="BRENDA" id="4.4.1.13">
    <property type="organism ID" value="2681"/>
</dbReference>
<dbReference type="PathwayCommons" id="Q6YP21"/>
<dbReference type="Reactome" id="R-HSA-71240">
    <property type="pathway name" value="Tryptophan catabolism"/>
</dbReference>
<dbReference type="SignaLink" id="Q6YP21"/>
<dbReference type="UniPathway" id="UPA00334">
    <property type="reaction ID" value="UER00726"/>
</dbReference>
<dbReference type="BioGRID-ORCS" id="56267">
    <property type="hits" value="7 hits in 1159 CRISPR screens"/>
</dbReference>
<dbReference type="ChiTaRS" id="KYAT3">
    <property type="organism name" value="human"/>
</dbReference>
<dbReference type="GenomeRNAi" id="56267"/>
<dbReference type="Pharos" id="Q6YP21">
    <property type="development level" value="Tbio"/>
</dbReference>
<dbReference type="PRO" id="PR:Q6YP21"/>
<dbReference type="Proteomes" id="UP000005640">
    <property type="component" value="Chromosome 1"/>
</dbReference>
<dbReference type="RNAct" id="Q6YP21">
    <property type="molecule type" value="protein"/>
</dbReference>
<dbReference type="Bgee" id="ENSG00000137944">
    <property type="expression patterns" value="Expressed in parotid gland and 207 other cell types or tissues"/>
</dbReference>
<dbReference type="ExpressionAtlas" id="Q6YP21">
    <property type="expression patterns" value="baseline and differential"/>
</dbReference>
<dbReference type="GO" id="GO:0005737">
    <property type="term" value="C:cytoplasm"/>
    <property type="evidence" value="ECO:0000318"/>
    <property type="project" value="GO_Central"/>
</dbReference>
<dbReference type="GO" id="GO:0005739">
    <property type="term" value="C:mitochondrion"/>
    <property type="evidence" value="ECO:0006056"/>
    <property type="project" value="FlyBase"/>
</dbReference>
<dbReference type="GO" id="GO:0047804">
    <property type="term" value="F:cysteine-S-conjugate beta-lyase activity"/>
    <property type="evidence" value="ECO:0007669"/>
    <property type="project" value="UniProtKB-EC"/>
</dbReference>
<dbReference type="GO" id="GO:0047315">
    <property type="term" value="F:kynurenine-glyoxylate transaminase activity"/>
    <property type="evidence" value="ECO:0000250"/>
    <property type="project" value="UniProtKB"/>
</dbReference>
<dbReference type="GO" id="GO:0016212">
    <property type="term" value="F:kynurenine-oxoglutarate transaminase activity"/>
    <property type="evidence" value="ECO:0000250"/>
    <property type="project" value="UniProtKB"/>
</dbReference>
<dbReference type="GO" id="GO:0042803">
    <property type="term" value="F:protein homodimerization activity"/>
    <property type="evidence" value="ECO:0007669"/>
    <property type="project" value="Ensembl"/>
</dbReference>
<dbReference type="GO" id="GO:0030170">
    <property type="term" value="F:pyridoxal phosphate binding"/>
    <property type="evidence" value="ECO:0007669"/>
    <property type="project" value="InterPro"/>
</dbReference>
<dbReference type="GO" id="GO:0003723">
    <property type="term" value="F:RNA binding"/>
    <property type="evidence" value="ECO:0007005"/>
    <property type="project" value="UniProtKB"/>
</dbReference>
<dbReference type="GO" id="GO:0006103">
    <property type="term" value="P:2-oxoglutarate metabolic process"/>
    <property type="evidence" value="ECO:0007669"/>
    <property type="project" value="Ensembl"/>
</dbReference>
<dbReference type="GO" id="GO:0006520">
    <property type="term" value="P:amino acid metabolic process"/>
    <property type="evidence" value="ECO:0000250"/>
    <property type="project" value="UniProtKB"/>
</dbReference>
<dbReference type="GO" id="GO:0009058">
    <property type="term" value="P:biosynthetic process"/>
    <property type="evidence" value="ECO:0007669"/>
    <property type="project" value="InterPro"/>
</dbReference>
<dbReference type="GO" id="GO:0070189">
    <property type="term" value="P:kynurenine metabolic process"/>
    <property type="evidence" value="ECO:0000250"/>
    <property type="project" value="UniProtKB"/>
</dbReference>
<dbReference type="GO" id="GO:0097053">
    <property type="term" value="P:L-kynurenine catabolic process"/>
    <property type="evidence" value="ECO:0007669"/>
    <property type="project" value="UniProtKB-UniPathway"/>
</dbReference>
<dbReference type="CDD" id="cd00609">
    <property type="entry name" value="AAT_like"/>
    <property type="match status" value="1"/>
</dbReference>
<dbReference type="FunFam" id="3.90.1150.10:FF:000275">
    <property type="entry name" value="kynurenine--oxoglutarate transaminase 1"/>
    <property type="match status" value="1"/>
</dbReference>
<dbReference type="FunFam" id="3.40.640.10:FF:000024">
    <property type="entry name" value="Kynurenine--oxoglutarate transaminase 3"/>
    <property type="match status" value="1"/>
</dbReference>
<dbReference type="FunFam" id="3.90.1150.10:FF:000021">
    <property type="entry name" value="Kynurenine--oxoglutarate transaminase 3"/>
    <property type="match status" value="1"/>
</dbReference>
<dbReference type="Gene3D" id="3.90.1150.10">
    <property type="entry name" value="Aspartate Aminotransferase, domain 1"/>
    <property type="match status" value="1"/>
</dbReference>
<dbReference type="Gene3D" id="3.40.640.10">
    <property type="entry name" value="Type I PLP-dependent aspartate aminotransferase-like (Major domain)"/>
    <property type="match status" value="1"/>
</dbReference>
<dbReference type="InterPro" id="IPR004839">
    <property type="entry name" value="Aminotransferase_I/II_large"/>
</dbReference>
<dbReference type="InterPro" id="IPR051326">
    <property type="entry name" value="Kynurenine-oxoglutarate_AT"/>
</dbReference>
<dbReference type="InterPro" id="IPR015424">
    <property type="entry name" value="PyrdxlP-dep_Trfase"/>
</dbReference>
<dbReference type="InterPro" id="IPR015421">
    <property type="entry name" value="PyrdxlP-dep_Trfase_major"/>
</dbReference>
<dbReference type="InterPro" id="IPR015422">
    <property type="entry name" value="PyrdxlP-dep_Trfase_small"/>
</dbReference>
<dbReference type="PANTHER" id="PTHR43807">
    <property type="entry name" value="FI04487P"/>
    <property type="match status" value="1"/>
</dbReference>
<dbReference type="PANTHER" id="PTHR43807:SF6">
    <property type="entry name" value="KYNURENINE--OXOGLUTARATE TRANSAMINASE 3"/>
    <property type="match status" value="1"/>
</dbReference>
<dbReference type="Pfam" id="PF00155">
    <property type="entry name" value="Aminotran_1_2"/>
    <property type="match status" value="1"/>
</dbReference>
<dbReference type="SUPFAM" id="SSF53383">
    <property type="entry name" value="PLP-dependent transferases"/>
    <property type="match status" value="1"/>
</dbReference>
<comment type="function">
    <text evidence="2">Catalyzes the irreversible transamination of the L-tryptophan metabolite L-kynurenine to form kynurenic acid (KA), an intermediate in the tryptophan catabolic pathway which is also a broad spectrum antagonist of the three ionotropic excitatory amino acid receptors among others. May catalyze the beta-elimination of S-conjugates and Se-conjugates of L-(seleno)cysteine, resulting in the cleavage of the C-S or C-Se bond. Has transaminase activity towards L-kynurenine, tryptophan, phenylalanine, serine, cysteine, methionine, histidine, glutamine and asparagine with glyoxylate as an amino group acceptor (in vitro). Has lower activity with 2-oxoglutarate as amino group acceptor (in vitro).</text>
</comment>
<comment type="catalytic activity">
    <reaction evidence="2">
        <text>L-kynurenine + 2-oxoglutarate = kynurenate + L-glutamate + H2O</text>
        <dbReference type="Rhea" id="RHEA:65560"/>
        <dbReference type="ChEBI" id="CHEBI:15377"/>
        <dbReference type="ChEBI" id="CHEBI:16810"/>
        <dbReference type="ChEBI" id="CHEBI:29985"/>
        <dbReference type="ChEBI" id="CHEBI:57959"/>
        <dbReference type="ChEBI" id="CHEBI:58454"/>
        <dbReference type="EC" id="2.6.1.7"/>
    </reaction>
    <physiologicalReaction direction="left-to-right" evidence="2">
        <dbReference type="Rhea" id="RHEA:65561"/>
    </physiologicalReaction>
</comment>
<comment type="catalytic activity">
    <reaction evidence="2">
        <text>L-kynurenine + glyoxylate = kynurenate + glycine + H2O</text>
        <dbReference type="Rhea" id="RHEA:65896"/>
        <dbReference type="ChEBI" id="CHEBI:15377"/>
        <dbReference type="ChEBI" id="CHEBI:36655"/>
        <dbReference type="ChEBI" id="CHEBI:57305"/>
        <dbReference type="ChEBI" id="CHEBI:57959"/>
        <dbReference type="ChEBI" id="CHEBI:58454"/>
        <dbReference type="EC" id="2.6.1.63"/>
    </reaction>
    <physiologicalReaction direction="left-to-right" evidence="2">
        <dbReference type="Rhea" id="RHEA:65897"/>
    </physiologicalReaction>
</comment>
<comment type="catalytic activity">
    <reaction evidence="2">
        <text>3-hydroxy-L-kynurenine + glyoxylate = xanthurenate + glycine + H2O</text>
        <dbReference type="Rhea" id="RHEA:65900"/>
        <dbReference type="ChEBI" id="CHEBI:15377"/>
        <dbReference type="ChEBI" id="CHEBI:36655"/>
        <dbReference type="ChEBI" id="CHEBI:57305"/>
        <dbReference type="ChEBI" id="CHEBI:58125"/>
        <dbReference type="ChEBI" id="CHEBI:71201"/>
        <dbReference type="EC" id="2.6.1.63"/>
    </reaction>
    <physiologicalReaction direction="left-to-right" evidence="2">
        <dbReference type="Rhea" id="RHEA:65901"/>
    </physiologicalReaction>
</comment>
<comment type="catalytic activity">
    <reaction evidence="2">
        <text>an S-substituted L-cysteine + H2O = a thiol + pyruvate + NH4(+)</text>
        <dbReference type="Rhea" id="RHEA:18121"/>
        <dbReference type="ChEBI" id="CHEBI:15361"/>
        <dbReference type="ChEBI" id="CHEBI:15377"/>
        <dbReference type="ChEBI" id="CHEBI:28938"/>
        <dbReference type="ChEBI" id="CHEBI:29256"/>
        <dbReference type="ChEBI" id="CHEBI:58717"/>
        <dbReference type="EC" id="4.4.1.13"/>
    </reaction>
    <physiologicalReaction direction="left-to-right" evidence="2">
        <dbReference type="Rhea" id="RHEA:18122"/>
    </physiologicalReaction>
</comment>
<comment type="cofactor">
    <cofactor evidence="2">
        <name>pyridoxal 5'-phosphate</name>
        <dbReference type="ChEBI" id="CHEBI:597326"/>
    </cofactor>
</comment>
<comment type="pathway">
    <text evidence="2">Amino-acid degradation; L-kynurenine degradation; kynurenate from L-kynurenine: step 1/2.</text>
</comment>
<comment type="subunit">
    <text evidence="2">Homodimer.</text>
</comment>
<comment type="alternative products">
    <event type="alternative splicing"/>
    <isoform>
        <id>Q6YP21-1</id>
        <name>1</name>
        <sequence type="displayed"/>
    </isoform>
    <isoform>
        <id>Q6YP21-2</id>
        <name>2</name>
        <sequence type="described" ref="VSP_025603 VSP_025604"/>
    </isoform>
    <isoform>
        <id>Q6YP21-3</id>
        <name>3</name>
        <sequence type="described" ref="VSP_042841"/>
    </isoform>
</comment>
<comment type="similarity">
    <text evidence="7">Belongs to the class-I pyridoxal-phosphate-dependent aminotransferase family.</text>
</comment>
<comment type="caution">
    <text evidence="7">The first non-coding exon of CCBL2 is in common with that of RBMXL1.</text>
</comment>
<comment type="sequence caution" evidence="7">
    <conflict type="frameshift">
        <sequence resource="EMBL-CDS" id="AAC72959"/>
    </conflict>
</comment>
<comment type="sequence caution" evidence="7">
    <conflict type="erroneous initiation">
        <sequence resource="EMBL-CDS" id="AAH00819"/>
    </conflict>
    <text>Truncated N-terminus.</text>
</comment>
<comment type="sequence caution" evidence="7">
    <conflict type="frameshift">
        <sequence resource="EMBL-CDS" id="CAG29278"/>
    </conflict>
</comment>